<reference key="1">
    <citation type="journal article" date="2007" name="PLoS Genet.">
        <title>Patterns and implications of gene gain and loss in the evolution of Prochlorococcus.</title>
        <authorList>
            <person name="Kettler G.C."/>
            <person name="Martiny A.C."/>
            <person name="Huang K."/>
            <person name="Zucker J."/>
            <person name="Coleman M.L."/>
            <person name="Rodrigue S."/>
            <person name="Chen F."/>
            <person name="Lapidus A."/>
            <person name="Ferriera S."/>
            <person name="Johnson J."/>
            <person name="Steglich C."/>
            <person name="Church G.M."/>
            <person name="Richardson P."/>
            <person name="Chisholm S.W."/>
        </authorList>
    </citation>
    <scope>NUCLEOTIDE SEQUENCE [LARGE SCALE GENOMIC DNA]</scope>
    <source>
        <strain>NATL2A</strain>
    </source>
</reference>
<protein>
    <recommendedName>
        <fullName evidence="1">Small ribosomal subunit protein uS13</fullName>
    </recommendedName>
    <alternativeName>
        <fullName evidence="3">30S ribosomal protein S13</fullName>
    </alternativeName>
</protein>
<proteinExistence type="inferred from homology"/>
<keyword id="KW-1185">Reference proteome</keyword>
<keyword id="KW-0687">Ribonucleoprotein</keyword>
<keyword id="KW-0689">Ribosomal protein</keyword>
<keyword id="KW-0694">RNA-binding</keyword>
<keyword id="KW-0699">rRNA-binding</keyword>
<keyword id="KW-0820">tRNA-binding</keyword>
<organism>
    <name type="scientific">Prochlorococcus marinus (strain NATL2A)</name>
    <dbReference type="NCBI Taxonomy" id="59920"/>
    <lineage>
        <taxon>Bacteria</taxon>
        <taxon>Bacillati</taxon>
        <taxon>Cyanobacteriota</taxon>
        <taxon>Cyanophyceae</taxon>
        <taxon>Synechococcales</taxon>
        <taxon>Prochlorococcaceae</taxon>
        <taxon>Prochlorococcus</taxon>
    </lineage>
</organism>
<feature type="chain" id="PRO_0000230547" description="Small ribosomal subunit protein uS13">
    <location>
        <begin position="1"/>
        <end position="121"/>
    </location>
</feature>
<feature type="region of interest" description="Disordered" evidence="2">
    <location>
        <begin position="97"/>
        <end position="121"/>
    </location>
</feature>
<feature type="compositionally biased region" description="Basic residues" evidence="2">
    <location>
        <begin position="100"/>
        <end position="121"/>
    </location>
</feature>
<gene>
    <name evidence="1" type="primary">rpsM</name>
    <name evidence="1" type="synonym">rps13</name>
    <name type="ordered locus">PMN2A_1108</name>
</gene>
<comment type="function">
    <text evidence="1">Located at the top of the head of the 30S subunit, it contacts several helices of the 16S rRNA. In the 70S ribosome it contacts the 23S rRNA (bridge B1a) and protein L5 of the 50S subunit (bridge B1b), connecting the 2 subunits; these bridges are implicated in subunit movement. Contacts the tRNAs in the A and P-sites.</text>
</comment>
<comment type="subunit">
    <text evidence="1">Part of the 30S ribosomal subunit. Forms a loose heterodimer with protein S19. Forms two bridges to the 50S subunit in the 70S ribosome.</text>
</comment>
<comment type="similarity">
    <text evidence="1">Belongs to the universal ribosomal protein uS13 family.</text>
</comment>
<evidence type="ECO:0000255" key="1">
    <source>
        <dbReference type="HAMAP-Rule" id="MF_01315"/>
    </source>
</evidence>
<evidence type="ECO:0000256" key="2">
    <source>
        <dbReference type="SAM" id="MobiDB-lite"/>
    </source>
</evidence>
<evidence type="ECO:0000305" key="3"/>
<accession>Q46IT0</accession>
<sequence length="121" mass="13813">MARISGIDIPREKRVEVALTYIYGIGLTRAQSILEKSGVNPDIRVKDLEDSDIQKLRAVTEEFTLEGDLRRQEGMALKRLQDIGCVRGRRHRMSLPVRGQRTRTNARTRRGARKTVAGRKK</sequence>
<name>RS13_PROMT</name>
<dbReference type="EMBL" id="CP000095">
    <property type="protein sequence ID" value="AAZ58598.1"/>
    <property type="molecule type" value="Genomic_DNA"/>
</dbReference>
<dbReference type="RefSeq" id="WP_011295452.1">
    <property type="nucleotide sequence ID" value="NC_007335.2"/>
</dbReference>
<dbReference type="SMR" id="Q46IT0"/>
<dbReference type="STRING" id="59920.PMN2A_1108"/>
<dbReference type="KEGG" id="pmn:PMN2A_1108"/>
<dbReference type="HOGENOM" id="CLU_103849_1_2_3"/>
<dbReference type="OrthoDB" id="9803610at2"/>
<dbReference type="PhylomeDB" id="Q46IT0"/>
<dbReference type="Proteomes" id="UP000002535">
    <property type="component" value="Chromosome"/>
</dbReference>
<dbReference type="GO" id="GO:0005829">
    <property type="term" value="C:cytosol"/>
    <property type="evidence" value="ECO:0007669"/>
    <property type="project" value="TreeGrafter"/>
</dbReference>
<dbReference type="GO" id="GO:0015935">
    <property type="term" value="C:small ribosomal subunit"/>
    <property type="evidence" value="ECO:0007669"/>
    <property type="project" value="TreeGrafter"/>
</dbReference>
<dbReference type="GO" id="GO:0019843">
    <property type="term" value="F:rRNA binding"/>
    <property type="evidence" value="ECO:0007669"/>
    <property type="project" value="UniProtKB-UniRule"/>
</dbReference>
<dbReference type="GO" id="GO:0003735">
    <property type="term" value="F:structural constituent of ribosome"/>
    <property type="evidence" value="ECO:0007669"/>
    <property type="project" value="InterPro"/>
</dbReference>
<dbReference type="GO" id="GO:0000049">
    <property type="term" value="F:tRNA binding"/>
    <property type="evidence" value="ECO:0007669"/>
    <property type="project" value="UniProtKB-UniRule"/>
</dbReference>
<dbReference type="GO" id="GO:0006412">
    <property type="term" value="P:translation"/>
    <property type="evidence" value="ECO:0007669"/>
    <property type="project" value="UniProtKB-UniRule"/>
</dbReference>
<dbReference type="FunFam" id="1.10.8.50:FF:000001">
    <property type="entry name" value="30S ribosomal protein S13"/>
    <property type="match status" value="1"/>
</dbReference>
<dbReference type="Gene3D" id="1.10.8.50">
    <property type="match status" value="1"/>
</dbReference>
<dbReference type="Gene3D" id="4.10.910.10">
    <property type="entry name" value="30s ribosomal protein s13, domain 2"/>
    <property type="match status" value="1"/>
</dbReference>
<dbReference type="HAMAP" id="MF_01315">
    <property type="entry name" value="Ribosomal_uS13"/>
    <property type="match status" value="1"/>
</dbReference>
<dbReference type="InterPro" id="IPR027437">
    <property type="entry name" value="Rbsml_uS13_C"/>
</dbReference>
<dbReference type="InterPro" id="IPR001892">
    <property type="entry name" value="Ribosomal_uS13"/>
</dbReference>
<dbReference type="InterPro" id="IPR010979">
    <property type="entry name" value="Ribosomal_uS13-like_H2TH"/>
</dbReference>
<dbReference type="InterPro" id="IPR019980">
    <property type="entry name" value="Ribosomal_uS13_bac-type"/>
</dbReference>
<dbReference type="InterPro" id="IPR018269">
    <property type="entry name" value="Ribosomal_uS13_CS"/>
</dbReference>
<dbReference type="NCBIfam" id="TIGR03631">
    <property type="entry name" value="uS13_bact"/>
    <property type="match status" value="1"/>
</dbReference>
<dbReference type="PANTHER" id="PTHR10871">
    <property type="entry name" value="30S RIBOSOMAL PROTEIN S13/40S RIBOSOMAL PROTEIN S18"/>
    <property type="match status" value="1"/>
</dbReference>
<dbReference type="PANTHER" id="PTHR10871:SF1">
    <property type="entry name" value="SMALL RIBOSOMAL SUBUNIT PROTEIN US13M"/>
    <property type="match status" value="1"/>
</dbReference>
<dbReference type="Pfam" id="PF00416">
    <property type="entry name" value="Ribosomal_S13"/>
    <property type="match status" value="1"/>
</dbReference>
<dbReference type="PIRSF" id="PIRSF002134">
    <property type="entry name" value="Ribosomal_S13"/>
    <property type="match status" value="1"/>
</dbReference>
<dbReference type="SUPFAM" id="SSF46946">
    <property type="entry name" value="S13-like H2TH domain"/>
    <property type="match status" value="1"/>
</dbReference>
<dbReference type="PROSITE" id="PS00646">
    <property type="entry name" value="RIBOSOMAL_S13_1"/>
    <property type="match status" value="1"/>
</dbReference>
<dbReference type="PROSITE" id="PS50159">
    <property type="entry name" value="RIBOSOMAL_S13_2"/>
    <property type="match status" value="1"/>
</dbReference>